<accession>C3LUM7</accession>
<gene>
    <name evidence="1" type="primary">nadE</name>
    <name type="ordered locus">VCM66_A0203</name>
</gene>
<proteinExistence type="inferred from homology"/>
<protein>
    <recommendedName>
        <fullName evidence="1">NH(3)-dependent NAD(+) synthetase</fullName>
        <ecNumber evidence="1">6.3.1.5</ecNumber>
    </recommendedName>
</protein>
<reference key="1">
    <citation type="journal article" date="2008" name="PLoS ONE">
        <title>A recalibrated molecular clock and independent origins for the cholera pandemic clones.</title>
        <authorList>
            <person name="Feng L."/>
            <person name="Reeves P.R."/>
            <person name="Lan R."/>
            <person name="Ren Y."/>
            <person name="Gao C."/>
            <person name="Zhou Z."/>
            <person name="Ren Y."/>
            <person name="Cheng J."/>
            <person name="Wang W."/>
            <person name="Wang J."/>
            <person name="Qian W."/>
            <person name="Li D."/>
            <person name="Wang L."/>
        </authorList>
    </citation>
    <scope>NUCLEOTIDE SEQUENCE [LARGE SCALE GENOMIC DNA]</scope>
    <source>
        <strain>M66-2</strain>
    </source>
</reference>
<sequence>MEHKIREEMRVLPSIDPQFEIERRVAFIKRKLTEARCKSLVLGISGGVDSTTCGRLAQLAVEELNQQHNTTEYQFIAVRLPYGEQKDEDEAQLALSFIRPTHSVSVNIKAGVDGLHAASHHALANTGLIPSDPAKVDFIKGNVKARARMVAQYEIAGYVGGLVLGTDHSAENITGFYTKFGDGACDLAPLFGLNKRQVRLLAKTLGAPEQLVYKTPTADLEELAPQKADEAALNLTYEQIDDFLEGKAVPAEVSQRLVAIYHATQHKRQPIPTIYD</sequence>
<comment type="function">
    <text evidence="1">Catalyzes the ATP-dependent amidation of deamido-NAD to form NAD. Uses ammonia as a nitrogen source.</text>
</comment>
<comment type="catalytic activity">
    <reaction evidence="1">
        <text>deamido-NAD(+) + NH4(+) + ATP = AMP + diphosphate + NAD(+) + H(+)</text>
        <dbReference type="Rhea" id="RHEA:21188"/>
        <dbReference type="ChEBI" id="CHEBI:15378"/>
        <dbReference type="ChEBI" id="CHEBI:28938"/>
        <dbReference type="ChEBI" id="CHEBI:30616"/>
        <dbReference type="ChEBI" id="CHEBI:33019"/>
        <dbReference type="ChEBI" id="CHEBI:57540"/>
        <dbReference type="ChEBI" id="CHEBI:58437"/>
        <dbReference type="ChEBI" id="CHEBI:456215"/>
        <dbReference type="EC" id="6.3.1.5"/>
    </reaction>
</comment>
<comment type="pathway">
    <text evidence="1">Cofactor biosynthesis; NAD(+) biosynthesis; NAD(+) from deamido-NAD(+) (ammonia route): step 1/1.</text>
</comment>
<comment type="subunit">
    <text evidence="1">Homodimer.</text>
</comment>
<comment type="similarity">
    <text evidence="1">Belongs to the NAD synthetase family.</text>
</comment>
<keyword id="KW-0067">ATP-binding</keyword>
<keyword id="KW-0436">Ligase</keyword>
<keyword id="KW-0460">Magnesium</keyword>
<keyword id="KW-0479">Metal-binding</keyword>
<keyword id="KW-0520">NAD</keyword>
<keyword id="KW-0547">Nucleotide-binding</keyword>
<organism>
    <name type="scientific">Vibrio cholerae serotype O1 (strain M66-2)</name>
    <dbReference type="NCBI Taxonomy" id="579112"/>
    <lineage>
        <taxon>Bacteria</taxon>
        <taxon>Pseudomonadati</taxon>
        <taxon>Pseudomonadota</taxon>
        <taxon>Gammaproteobacteria</taxon>
        <taxon>Vibrionales</taxon>
        <taxon>Vibrionaceae</taxon>
        <taxon>Vibrio</taxon>
    </lineage>
</organism>
<evidence type="ECO:0000255" key="1">
    <source>
        <dbReference type="HAMAP-Rule" id="MF_00193"/>
    </source>
</evidence>
<feature type="chain" id="PRO_1000191515" description="NH(3)-dependent NAD(+) synthetase">
    <location>
        <begin position="1"/>
        <end position="276"/>
    </location>
</feature>
<feature type="binding site" evidence="1">
    <location>
        <begin position="43"/>
        <end position="50"/>
    </location>
    <ligand>
        <name>ATP</name>
        <dbReference type="ChEBI" id="CHEBI:30616"/>
    </ligand>
</feature>
<feature type="binding site" evidence="1">
    <location>
        <position position="49"/>
    </location>
    <ligand>
        <name>Mg(2+)</name>
        <dbReference type="ChEBI" id="CHEBI:18420"/>
    </ligand>
</feature>
<feature type="binding site" evidence="1">
    <location>
        <position position="146"/>
    </location>
    <ligand>
        <name>deamido-NAD(+)</name>
        <dbReference type="ChEBI" id="CHEBI:58437"/>
    </ligand>
</feature>
<feature type="binding site" evidence="1">
    <location>
        <position position="166"/>
    </location>
    <ligand>
        <name>ATP</name>
        <dbReference type="ChEBI" id="CHEBI:30616"/>
    </ligand>
</feature>
<feature type="binding site" evidence="1">
    <location>
        <position position="171"/>
    </location>
    <ligand>
        <name>Mg(2+)</name>
        <dbReference type="ChEBI" id="CHEBI:18420"/>
    </ligand>
</feature>
<feature type="binding site" evidence="1">
    <location>
        <position position="179"/>
    </location>
    <ligand>
        <name>deamido-NAD(+)</name>
        <dbReference type="ChEBI" id="CHEBI:58437"/>
    </ligand>
</feature>
<feature type="binding site" evidence="1">
    <location>
        <position position="186"/>
    </location>
    <ligand>
        <name>deamido-NAD(+)</name>
        <dbReference type="ChEBI" id="CHEBI:58437"/>
    </ligand>
</feature>
<feature type="binding site" evidence="1">
    <location>
        <position position="195"/>
    </location>
    <ligand>
        <name>ATP</name>
        <dbReference type="ChEBI" id="CHEBI:30616"/>
    </ligand>
</feature>
<feature type="binding site" evidence="1">
    <location>
        <position position="217"/>
    </location>
    <ligand>
        <name>ATP</name>
        <dbReference type="ChEBI" id="CHEBI:30616"/>
    </ligand>
</feature>
<feature type="binding site" evidence="1">
    <location>
        <begin position="266"/>
        <end position="267"/>
    </location>
    <ligand>
        <name>deamido-NAD(+)</name>
        <dbReference type="ChEBI" id="CHEBI:58437"/>
    </ligand>
</feature>
<dbReference type="EC" id="6.3.1.5" evidence="1"/>
<dbReference type="EMBL" id="CP001234">
    <property type="protein sequence ID" value="ACP07182.1"/>
    <property type="molecule type" value="Genomic_DNA"/>
</dbReference>
<dbReference type="RefSeq" id="WP_000400328.1">
    <property type="nucleotide sequence ID" value="NC_012580.1"/>
</dbReference>
<dbReference type="SMR" id="C3LUM7"/>
<dbReference type="KEGG" id="vcm:VCM66_A0203"/>
<dbReference type="HOGENOM" id="CLU_059327_3_0_6"/>
<dbReference type="UniPathway" id="UPA00253">
    <property type="reaction ID" value="UER00333"/>
</dbReference>
<dbReference type="Proteomes" id="UP000001217">
    <property type="component" value="Chromosome II"/>
</dbReference>
<dbReference type="GO" id="GO:0005737">
    <property type="term" value="C:cytoplasm"/>
    <property type="evidence" value="ECO:0007669"/>
    <property type="project" value="InterPro"/>
</dbReference>
<dbReference type="GO" id="GO:0005524">
    <property type="term" value="F:ATP binding"/>
    <property type="evidence" value="ECO:0007669"/>
    <property type="project" value="UniProtKB-UniRule"/>
</dbReference>
<dbReference type="GO" id="GO:0004359">
    <property type="term" value="F:glutaminase activity"/>
    <property type="evidence" value="ECO:0007669"/>
    <property type="project" value="InterPro"/>
</dbReference>
<dbReference type="GO" id="GO:0046872">
    <property type="term" value="F:metal ion binding"/>
    <property type="evidence" value="ECO:0007669"/>
    <property type="project" value="UniProtKB-KW"/>
</dbReference>
<dbReference type="GO" id="GO:0003952">
    <property type="term" value="F:NAD+ synthase (glutamine-hydrolyzing) activity"/>
    <property type="evidence" value="ECO:0007669"/>
    <property type="project" value="InterPro"/>
</dbReference>
<dbReference type="GO" id="GO:0008795">
    <property type="term" value="F:NAD+ synthase activity"/>
    <property type="evidence" value="ECO:0007669"/>
    <property type="project" value="UniProtKB-UniRule"/>
</dbReference>
<dbReference type="GO" id="GO:0009435">
    <property type="term" value="P:NAD biosynthetic process"/>
    <property type="evidence" value="ECO:0007669"/>
    <property type="project" value="UniProtKB-UniRule"/>
</dbReference>
<dbReference type="CDD" id="cd00553">
    <property type="entry name" value="NAD_synthase"/>
    <property type="match status" value="1"/>
</dbReference>
<dbReference type="FunFam" id="3.40.50.620:FF:000015">
    <property type="entry name" value="NH(3)-dependent NAD(+) synthetase"/>
    <property type="match status" value="1"/>
</dbReference>
<dbReference type="Gene3D" id="3.40.50.620">
    <property type="entry name" value="HUPs"/>
    <property type="match status" value="1"/>
</dbReference>
<dbReference type="HAMAP" id="MF_00193">
    <property type="entry name" value="NadE_ammonia_dep"/>
    <property type="match status" value="1"/>
</dbReference>
<dbReference type="InterPro" id="IPR022310">
    <property type="entry name" value="NAD/GMP_synthase"/>
</dbReference>
<dbReference type="InterPro" id="IPR003694">
    <property type="entry name" value="NAD_synthase"/>
</dbReference>
<dbReference type="InterPro" id="IPR022926">
    <property type="entry name" value="NH(3)-dep_NAD(+)_synth"/>
</dbReference>
<dbReference type="InterPro" id="IPR014729">
    <property type="entry name" value="Rossmann-like_a/b/a_fold"/>
</dbReference>
<dbReference type="NCBIfam" id="TIGR00552">
    <property type="entry name" value="nadE"/>
    <property type="match status" value="1"/>
</dbReference>
<dbReference type="NCBIfam" id="NF001979">
    <property type="entry name" value="PRK00768.1"/>
    <property type="match status" value="1"/>
</dbReference>
<dbReference type="PANTHER" id="PTHR23090">
    <property type="entry name" value="NH 3 /GLUTAMINE-DEPENDENT NAD + SYNTHETASE"/>
    <property type="match status" value="1"/>
</dbReference>
<dbReference type="PANTHER" id="PTHR23090:SF7">
    <property type="entry name" value="NH(3)-DEPENDENT NAD(+) SYNTHETASE"/>
    <property type="match status" value="1"/>
</dbReference>
<dbReference type="Pfam" id="PF02540">
    <property type="entry name" value="NAD_synthase"/>
    <property type="match status" value="1"/>
</dbReference>
<dbReference type="SUPFAM" id="SSF52402">
    <property type="entry name" value="Adenine nucleotide alpha hydrolases-like"/>
    <property type="match status" value="1"/>
</dbReference>
<name>NADE_VIBCM</name>